<name>TDH_SALTI</name>
<sequence>MKALSKLKAEEGIWMTDVPEPEVGHNDLLIKIRKTAICGTDVHIYNWDEWSQKTIPVPMVVGHEYVGEVVGIGQEVKGFKIGDRVSGEGHITCGHCRNCRGGRTHLCRNTTGVGVNRPGCFAEYLVIPAFNAFKIPDNISDDLASIFDPFGNAVHTALSFDLVGEDVLVSGAGPIGVMAAAVAKHVGARHVVITDVNEYRLELARKMGVTRAVNVAKESLNDVMAELGMTEGFDVGLEMSGAPPAFRTMLDTMNHGGRIAMLGIPPSDMSIDWTKVIFKGLFIKGIYGREMFETWYKMAALIQSGLDLSPIITHRFSVDDFQKGFDAMCSGQSGKVILSWD</sequence>
<feature type="chain" id="PRO_0000160854" description="L-threonine 3-dehydrogenase">
    <location>
        <begin position="1"/>
        <end position="341"/>
    </location>
</feature>
<feature type="active site" description="Charge relay system" evidence="1">
    <location>
        <position position="40"/>
    </location>
</feature>
<feature type="active site" description="Charge relay system" evidence="1">
    <location>
        <position position="43"/>
    </location>
</feature>
<feature type="binding site" evidence="1">
    <location>
        <position position="38"/>
    </location>
    <ligand>
        <name>Zn(2+)</name>
        <dbReference type="ChEBI" id="CHEBI:29105"/>
        <label>1</label>
        <note>catalytic</note>
    </ligand>
</feature>
<feature type="binding site" evidence="1">
    <location>
        <position position="63"/>
    </location>
    <ligand>
        <name>Zn(2+)</name>
        <dbReference type="ChEBI" id="CHEBI:29105"/>
        <label>1</label>
        <note>catalytic</note>
    </ligand>
</feature>
<feature type="binding site" evidence="1">
    <location>
        <position position="64"/>
    </location>
    <ligand>
        <name>Zn(2+)</name>
        <dbReference type="ChEBI" id="CHEBI:29105"/>
        <label>1</label>
        <note>catalytic</note>
    </ligand>
</feature>
<feature type="binding site" evidence="1">
    <location>
        <position position="93"/>
    </location>
    <ligand>
        <name>Zn(2+)</name>
        <dbReference type="ChEBI" id="CHEBI:29105"/>
        <label>2</label>
    </ligand>
</feature>
<feature type="binding site" evidence="1">
    <location>
        <position position="96"/>
    </location>
    <ligand>
        <name>Zn(2+)</name>
        <dbReference type="ChEBI" id="CHEBI:29105"/>
        <label>2</label>
    </ligand>
</feature>
<feature type="binding site" evidence="1">
    <location>
        <position position="99"/>
    </location>
    <ligand>
        <name>Zn(2+)</name>
        <dbReference type="ChEBI" id="CHEBI:29105"/>
        <label>2</label>
    </ligand>
</feature>
<feature type="binding site" evidence="1">
    <location>
        <position position="107"/>
    </location>
    <ligand>
        <name>Zn(2+)</name>
        <dbReference type="ChEBI" id="CHEBI:29105"/>
        <label>2</label>
    </ligand>
</feature>
<feature type="binding site" evidence="1">
    <location>
        <position position="175"/>
    </location>
    <ligand>
        <name>NAD(+)</name>
        <dbReference type="ChEBI" id="CHEBI:57540"/>
    </ligand>
</feature>
<feature type="binding site" evidence="1">
    <location>
        <position position="195"/>
    </location>
    <ligand>
        <name>NAD(+)</name>
        <dbReference type="ChEBI" id="CHEBI:57540"/>
    </ligand>
</feature>
<feature type="binding site" evidence="1">
    <location>
        <position position="200"/>
    </location>
    <ligand>
        <name>NAD(+)</name>
        <dbReference type="ChEBI" id="CHEBI:57540"/>
    </ligand>
</feature>
<feature type="binding site" evidence="1">
    <location>
        <begin position="262"/>
        <end position="264"/>
    </location>
    <ligand>
        <name>NAD(+)</name>
        <dbReference type="ChEBI" id="CHEBI:57540"/>
    </ligand>
</feature>
<feature type="binding site" evidence="1">
    <location>
        <begin position="286"/>
        <end position="287"/>
    </location>
    <ligand>
        <name>NAD(+)</name>
        <dbReference type="ChEBI" id="CHEBI:57540"/>
    </ligand>
</feature>
<feature type="site" description="Important for catalytic activity for the proton relay mechanism but does not participate directly in the coordination of zinc atom" evidence="1">
    <location>
        <position position="148"/>
    </location>
</feature>
<accession>Q8Z2F4</accession>
<protein>
    <recommendedName>
        <fullName evidence="1">L-threonine 3-dehydrogenase</fullName>
        <shortName evidence="1">TDH</shortName>
        <ecNumber evidence="1">1.1.1.103</ecNumber>
    </recommendedName>
</protein>
<dbReference type="EC" id="1.1.1.103" evidence="1"/>
<dbReference type="EMBL" id="AL513382">
    <property type="protein sequence ID" value="CAD03286.1"/>
    <property type="molecule type" value="Genomic_DNA"/>
</dbReference>
<dbReference type="EMBL" id="AE014613">
    <property type="protein sequence ID" value="AAO71293.1"/>
    <property type="molecule type" value="Genomic_DNA"/>
</dbReference>
<dbReference type="RefSeq" id="NP_458219.1">
    <property type="nucleotide sequence ID" value="NC_003198.1"/>
</dbReference>
<dbReference type="RefSeq" id="WP_000645995.1">
    <property type="nucleotide sequence ID" value="NZ_WSUR01000001.1"/>
</dbReference>
<dbReference type="SMR" id="Q8Z2F4"/>
<dbReference type="STRING" id="220341.gene:17587930"/>
<dbReference type="KEGG" id="stt:t3811"/>
<dbReference type="KEGG" id="sty:STY4087"/>
<dbReference type="PATRIC" id="fig|220341.7.peg.4172"/>
<dbReference type="eggNOG" id="COG1063">
    <property type="taxonomic scope" value="Bacteria"/>
</dbReference>
<dbReference type="HOGENOM" id="CLU_026673_11_0_6"/>
<dbReference type="OMA" id="FETWYAM"/>
<dbReference type="OrthoDB" id="9773078at2"/>
<dbReference type="UniPathway" id="UPA00046">
    <property type="reaction ID" value="UER00505"/>
</dbReference>
<dbReference type="Proteomes" id="UP000000541">
    <property type="component" value="Chromosome"/>
</dbReference>
<dbReference type="Proteomes" id="UP000002670">
    <property type="component" value="Chromosome"/>
</dbReference>
<dbReference type="GO" id="GO:0005737">
    <property type="term" value="C:cytoplasm"/>
    <property type="evidence" value="ECO:0007669"/>
    <property type="project" value="UniProtKB-SubCell"/>
</dbReference>
<dbReference type="GO" id="GO:0008743">
    <property type="term" value="F:L-threonine 3-dehydrogenase activity"/>
    <property type="evidence" value="ECO:0007669"/>
    <property type="project" value="UniProtKB-UniRule"/>
</dbReference>
<dbReference type="GO" id="GO:0008270">
    <property type="term" value="F:zinc ion binding"/>
    <property type="evidence" value="ECO:0007669"/>
    <property type="project" value="UniProtKB-UniRule"/>
</dbReference>
<dbReference type="GO" id="GO:0019518">
    <property type="term" value="P:L-threonine catabolic process to glycine"/>
    <property type="evidence" value="ECO:0007669"/>
    <property type="project" value="UniProtKB-UniPathway"/>
</dbReference>
<dbReference type="FunFam" id="3.40.50.720:FF:000059">
    <property type="entry name" value="L-threonine 3-dehydrogenase"/>
    <property type="match status" value="1"/>
</dbReference>
<dbReference type="Gene3D" id="3.90.180.10">
    <property type="entry name" value="Medium-chain alcohol dehydrogenases, catalytic domain"/>
    <property type="match status" value="1"/>
</dbReference>
<dbReference type="Gene3D" id="3.40.50.720">
    <property type="entry name" value="NAD(P)-binding Rossmann-like Domain"/>
    <property type="match status" value="1"/>
</dbReference>
<dbReference type="HAMAP" id="MF_00627">
    <property type="entry name" value="Thr_dehydrog"/>
    <property type="match status" value="1"/>
</dbReference>
<dbReference type="InterPro" id="IPR013149">
    <property type="entry name" value="ADH-like_C"/>
</dbReference>
<dbReference type="InterPro" id="IPR013154">
    <property type="entry name" value="ADH-like_N"/>
</dbReference>
<dbReference type="InterPro" id="IPR002328">
    <property type="entry name" value="ADH_Zn_CS"/>
</dbReference>
<dbReference type="InterPro" id="IPR011032">
    <property type="entry name" value="GroES-like_sf"/>
</dbReference>
<dbReference type="InterPro" id="IPR004627">
    <property type="entry name" value="L-Threonine_3-DHase"/>
</dbReference>
<dbReference type="InterPro" id="IPR036291">
    <property type="entry name" value="NAD(P)-bd_dom_sf"/>
</dbReference>
<dbReference type="InterPro" id="IPR020843">
    <property type="entry name" value="PKS_ER"/>
</dbReference>
<dbReference type="InterPro" id="IPR050129">
    <property type="entry name" value="Zn_alcohol_dh"/>
</dbReference>
<dbReference type="NCBIfam" id="NF003808">
    <property type="entry name" value="PRK05396.1"/>
    <property type="match status" value="1"/>
</dbReference>
<dbReference type="NCBIfam" id="TIGR00692">
    <property type="entry name" value="tdh"/>
    <property type="match status" value="1"/>
</dbReference>
<dbReference type="PANTHER" id="PTHR43401">
    <property type="entry name" value="L-THREONINE 3-DEHYDROGENASE"/>
    <property type="match status" value="1"/>
</dbReference>
<dbReference type="PANTHER" id="PTHR43401:SF2">
    <property type="entry name" value="L-THREONINE 3-DEHYDROGENASE"/>
    <property type="match status" value="1"/>
</dbReference>
<dbReference type="Pfam" id="PF08240">
    <property type="entry name" value="ADH_N"/>
    <property type="match status" value="1"/>
</dbReference>
<dbReference type="Pfam" id="PF00107">
    <property type="entry name" value="ADH_zinc_N"/>
    <property type="match status" value="1"/>
</dbReference>
<dbReference type="SMART" id="SM00829">
    <property type="entry name" value="PKS_ER"/>
    <property type="match status" value="1"/>
</dbReference>
<dbReference type="SUPFAM" id="SSF50129">
    <property type="entry name" value="GroES-like"/>
    <property type="match status" value="1"/>
</dbReference>
<dbReference type="SUPFAM" id="SSF51735">
    <property type="entry name" value="NAD(P)-binding Rossmann-fold domains"/>
    <property type="match status" value="1"/>
</dbReference>
<dbReference type="PROSITE" id="PS00059">
    <property type="entry name" value="ADH_ZINC"/>
    <property type="match status" value="1"/>
</dbReference>
<keyword id="KW-0963">Cytoplasm</keyword>
<keyword id="KW-0479">Metal-binding</keyword>
<keyword id="KW-0520">NAD</keyword>
<keyword id="KW-0560">Oxidoreductase</keyword>
<keyword id="KW-0862">Zinc</keyword>
<reference key="1">
    <citation type="journal article" date="2001" name="Nature">
        <title>Complete genome sequence of a multiple drug resistant Salmonella enterica serovar Typhi CT18.</title>
        <authorList>
            <person name="Parkhill J."/>
            <person name="Dougan G."/>
            <person name="James K.D."/>
            <person name="Thomson N.R."/>
            <person name="Pickard D."/>
            <person name="Wain J."/>
            <person name="Churcher C.M."/>
            <person name="Mungall K.L."/>
            <person name="Bentley S.D."/>
            <person name="Holden M.T.G."/>
            <person name="Sebaihia M."/>
            <person name="Baker S."/>
            <person name="Basham D."/>
            <person name="Brooks K."/>
            <person name="Chillingworth T."/>
            <person name="Connerton P."/>
            <person name="Cronin A."/>
            <person name="Davis P."/>
            <person name="Davies R.M."/>
            <person name="Dowd L."/>
            <person name="White N."/>
            <person name="Farrar J."/>
            <person name="Feltwell T."/>
            <person name="Hamlin N."/>
            <person name="Haque A."/>
            <person name="Hien T.T."/>
            <person name="Holroyd S."/>
            <person name="Jagels K."/>
            <person name="Krogh A."/>
            <person name="Larsen T.S."/>
            <person name="Leather S."/>
            <person name="Moule S."/>
            <person name="O'Gaora P."/>
            <person name="Parry C."/>
            <person name="Quail M.A."/>
            <person name="Rutherford K.M."/>
            <person name="Simmonds M."/>
            <person name="Skelton J."/>
            <person name="Stevens K."/>
            <person name="Whitehead S."/>
            <person name="Barrell B.G."/>
        </authorList>
    </citation>
    <scope>NUCLEOTIDE SEQUENCE [LARGE SCALE GENOMIC DNA]</scope>
    <source>
        <strain>CT18</strain>
    </source>
</reference>
<reference key="2">
    <citation type="journal article" date="2003" name="J. Bacteriol.">
        <title>Comparative genomics of Salmonella enterica serovar Typhi strains Ty2 and CT18.</title>
        <authorList>
            <person name="Deng W."/>
            <person name="Liou S.-R."/>
            <person name="Plunkett G. III"/>
            <person name="Mayhew G.F."/>
            <person name="Rose D.J."/>
            <person name="Burland V."/>
            <person name="Kodoyianni V."/>
            <person name="Schwartz D.C."/>
            <person name="Blattner F.R."/>
        </authorList>
    </citation>
    <scope>NUCLEOTIDE SEQUENCE [LARGE SCALE GENOMIC DNA]</scope>
    <source>
        <strain>ATCC 700931 / Ty2</strain>
    </source>
</reference>
<gene>
    <name evidence="1" type="primary">tdh</name>
    <name type="ordered locus">STY4087</name>
    <name type="ordered locus">t3811</name>
</gene>
<comment type="function">
    <text evidence="1">Catalyzes the NAD(+)-dependent oxidation of L-threonine to 2-amino-3-ketobutyrate.</text>
</comment>
<comment type="catalytic activity">
    <reaction evidence="1">
        <text>L-threonine + NAD(+) = (2S)-2-amino-3-oxobutanoate + NADH + H(+)</text>
        <dbReference type="Rhea" id="RHEA:13161"/>
        <dbReference type="ChEBI" id="CHEBI:15378"/>
        <dbReference type="ChEBI" id="CHEBI:57540"/>
        <dbReference type="ChEBI" id="CHEBI:57926"/>
        <dbReference type="ChEBI" id="CHEBI:57945"/>
        <dbReference type="ChEBI" id="CHEBI:78948"/>
        <dbReference type="EC" id="1.1.1.103"/>
    </reaction>
</comment>
<comment type="cofactor">
    <cofactor evidence="1">
        <name>Zn(2+)</name>
        <dbReference type="ChEBI" id="CHEBI:29105"/>
    </cofactor>
    <text evidence="1">Binds 2 Zn(2+) ions per subunit.</text>
</comment>
<comment type="pathway">
    <text evidence="1">Amino-acid degradation; L-threonine degradation via oxydo-reductase pathway; glycine from L-threonine: step 1/2.</text>
</comment>
<comment type="subunit">
    <text evidence="1">Homotetramer.</text>
</comment>
<comment type="subcellular location">
    <subcellularLocation>
        <location evidence="1">Cytoplasm</location>
    </subcellularLocation>
</comment>
<comment type="similarity">
    <text evidence="1">Belongs to the zinc-containing alcohol dehydrogenase family.</text>
</comment>
<proteinExistence type="inferred from homology"/>
<evidence type="ECO:0000255" key="1">
    <source>
        <dbReference type="HAMAP-Rule" id="MF_00627"/>
    </source>
</evidence>
<organism>
    <name type="scientific">Salmonella typhi</name>
    <dbReference type="NCBI Taxonomy" id="90370"/>
    <lineage>
        <taxon>Bacteria</taxon>
        <taxon>Pseudomonadati</taxon>
        <taxon>Pseudomonadota</taxon>
        <taxon>Gammaproteobacteria</taxon>
        <taxon>Enterobacterales</taxon>
        <taxon>Enterobacteriaceae</taxon>
        <taxon>Salmonella</taxon>
    </lineage>
</organism>